<proteinExistence type="inferred from homology"/>
<evidence type="ECO:0000255" key="1">
    <source>
        <dbReference type="HAMAP-Rule" id="MF_01588"/>
    </source>
</evidence>
<protein>
    <recommendedName>
        <fullName evidence="1">DNA ligase</fullName>
        <ecNumber evidence="1">6.5.1.2</ecNumber>
    </recommendedName>
    <alternativeName>
        <fullName evidence="1">Polydeoxyribonucleotide synthase [NAD(+)]</fullName>
    </alternativeName>
</protein>
<comment type="function">
    <text evidence="1">DNA ligase that catalyzes the formation of phosphodiester linkages between 5'-phosphoryl and 3'-hydroxyl groups in double-stranded DNA using NAD as a coenzyme and as the energy source for the reaction. It is essential for DNA replication and repair of damaged DNA.</text>
</comment>
<comment type="catalytic activity">
    <reaction evidence="1">
        <text>NAD(+) + (deoxyribonucleotide)n-3'-hydroxyl + 5'-phospho-(deoxyribonucleotide)m = (deoxyribonucleotide)n+m + AMP + beta-nicotinamide D-nucleotide.</text>
        <dbReference type="EC" id="6.5.1.2"/>
    </reaction>
</comment>
<comment type="cofactor">
    <cofactor evidence="1">
        <name>Mg(2+)</name>
        <dbReference type="ChEBI" id="CHEBI:18420"/>
    </cofactor>
    <cofactor evidence="1">
        <name>Mn(2+)</name>
        <dbReference type="ChEBI" id="CHEBI:29035"/>
    </cofactor>
</comment>
<comment type="similarity">
    <text evidence="1">Belongs to the NAD-dependent DNA ligase family. LigA subfamily.</text>
</comment>
<reference key="1">
    <citation type="journal article" date="2004" name="Science">
        <title>Illuminating the evolutionary history of chlamydiae.</title>
        <authorList>
            <person name="Horn M."/>
            <person name="Collingro A."/>
            <person name="Schmitz-Esser S."/>
            <person name="Beier C.L."/>
            <person name="Purkhold U."/>
            <person name="Fartmann B."/>
            <person name="Brandt P."/>
            <person name="Nyakatura G.J."/>
            <person name="Droege M."/>
            <person name="Frishman D."/>
            <person name="Rattei T."/>
            <person name="Mewes H.-W."/>
            <person name="Wagner M."/>
        </authorList>
    </citation>
    <scope>NUCLEOTIDE SEQUENCE [LARGE SCALE GENOMIC DNA]</scope>
    <source>
        <strain>UWE25</strain>
    </source>
</reference>
<feature type="chain" id="PRO_0000313370" description="DNA ligase">
    <location>
        <begin position="1"/>
        <end position="665"/>
    </location>
</feature>
<feature type="domain" description="BRCT" evidence="1">
    <location>
        <begin position="588"/>
        <end position="665"/>
    </location>
</feature>
<feature type="active site" description="N6-AMP-lysine intermediate" evidence="1">
    <location>
        <position position="113"/>
    </location>
</feature>
<feature type="binding site" evidence="1">
    <location>
        <begin position="31"/>
        <end position="35"/>
    </location>
    <ligand>
        <name>NAD(+)</name>
        <dbReference type="ChEBI" id="CHEBI:57540"/>
    </ligand>
</feature>
<feature type="binding site" evidence="1">
    <location>
        <begin position="80"/>
        <end position="81"/>
    </location>
    <ligand>
        <name>NAD(+)</name>
        <dbReference type="ChEBI" id="CHEBI:57540"/>
    </ligand>
</feature>
<feature type="binding site" evidence="1">
    <location>
        <position position="111"/>
    </location>
    <ligand>
        <name>NAD(+)</name>
        <dbReference type="ChEBI" id="CHEBI:57540"/>
    </ligand>
</feature>
<feature type="binding site" evidence="1">
    <location>
        <position position="134"/>
    </location>
    <ligand>
        <name>NAD(+)</name>
        <dbReference type="ChEBI" id="CHEBI:57540"/>
    </ligand>
</feature>
<feature type="binding site" evidence="1">
    <location>
        <position position="171"/>
    </location>
    <ligand>
        <name>NAD(+)</name>
        <dbReference type="ChEBI" id="CHEBI:57540"/>
    </ligand>
</feature>
<feature type="binding site" evidence="1">
    <location>
        <position position="287"/>
    </location>
    <ligand>
        <name>NAD(+)</name>
        <dbReference type="ChEBI" id="CHEBI:57540"/>
    </ligand>
</feature>
<feature type="binding site" evidence="1">
    <location>
        <position position="311"/>
    </location>
    <ligand>
        <name>NAD(+)</name>
        <dbReference type="ChEBI" id="CHEBI:57540"/>
    </ligand>
</feature>
<feature type="binding site" evidence="1">
    <location>
        <position position="405"/>
    </location>
    <ligand>
        <name>Zn(2+)</name>
        <dbReference type="ChEBI" id="CHEBI:29105"/>
    </ligand>
</feature>
<feature type="binding site" evidence="1">
    <location>
        <position position="408"/>
    </location>
    <ligand>
        <name>Zn(2+)</name>
        <dbReference type="ChEBI" id="CHEBI:29105"/>
    </ligand>
</feature>
<feature type="binding site" evidence="1">
    <location>
        <position position="423"/>
    </location>
    <ligand>
        <name>Zn(2+)</name>
        <dbReference type="ChEBI" id="CHEBI:29105"/>
    </ligand>
</feature>
<feature type="binding site" evidence="1">
    <location>
        <position position="429"/>
    </location>
    <ligand>
        <name>Zn(2+)</name>
        <dbReference type="ChEBI" id="CHEBI:29105"/>
    </ligand>
</feature>
<keyword id="KW-0227">DNA damage</keyword>
<keyword id="KW-0234">DNA repair</keyword>
<keyword id="KW-0235">DNA replication</keyword>
<keyword id="KW-0436">Ligase</keyword>
<keyword id="KW-0460">Magnesium</keyword>
<keyword id="KW-0464">Manganese</keyword>
<keyword id="KW-0479">Metal-binding</keyword>
<keyword id="KW-0520">NAD</keyword>
<keyword id="KW-1185">Reference proteome</keyword>
<keyword id="KW-0862">Zinc</keyword>
<name>DNLJ_PARUW</name>
<dbReference type="EC" id="6.5.1.2" evidence="1"/>
<dbReference type="EMBL" id="BX908798">
    <property type="protein sequence ID" value="CAF24484.1"/>
    <property type="molecule type" value="Genomic_DNA"/>
</dbReference>
<dbReference type="RefSeq" id="WP_011176305.1">
    <property type="nucleotide sequence ID" value="NC_005861.2"/>
</dbReference>
<dbReference type="SMR" id="Q6MAB5"/>
<dbReference type="STRING" id="264201.pc1760"/>
<dbReference type="KEGG" id="pcu:PC_RS08430"/>
<dbReference type="eggNOG" id="COG0272">
    <property type="taxonomic scope" value="Bacteria"/>
</dbReference>
<dbReference type="HOGENOM" id="CLU_007764_2_1_0"/>
<dbReference type="OrthoDB" id="9759736at2"/>
<dbReference type="Proteomes" id="UP000000529">
    <property type="component" value="Chromosome"/>
</dbReference>
<dbReference type="GO" id="GO:0005829">
    <property type="term" value="C:cytosol"/>
    <property type="evidence" value="ECO:0007669"/>
    <property type="project" value="TreeGrafter"/>
</dbReference>
<dbReference type="GO" id="GO:0003677">
    <property type="term" value="F:DNA binding"/>
    <property type="evidence" value="ECO:0007669"/>
    <property type="project" value="InterPro"/>
</dbReference>
<dbReference type="GO" id="GO:0003911">
    <property type="term" value="F:DNA ligase (NAD+) activity"/>
    <property type="evidence" value="ECO:0007669"/>
    <property type="project" value="UniProtKB-UniRule"/>
</dbReference>
<dbReference type="GO" id="GO:0046872">
    <property type="term" value="F:metal ion binding"/>
    <property type="evidence" value="ECO:0007669"/>
    <property type="project" value="UniProtKB-KW"/>
</dbReference>
<dbReference type="GO" id="GO:0006281">
    <property type="term" value="P:DNA repair"/>
    <property type="evidence" value="ECO:0007669"/>
    <property type="project" value="UniProtKB-KW"/>
</dbReference>
<dbReference type="GO" id="GO:0006260">
    <property type="term" value="P:DNA replication"/>
    <property type="evidence" value="ECO:0007669"/>
    <property type="project" value="UniProtKB-KW"/>
</dbReference>
<dbReference type="CDD" id="cd17748">
    <property type="entry name" value="BRCT_DNA_ligase_like"/>
    <property type="match status" value="1"/>
</dbReference>
<dbReference type="CDD" id="cd00114">
    <property type="entry name" value="LIGANc"/>
    <property type="match status" value="1"/>
</dbReference>
<dbReference type="FunFam" id="2.40.50.140:FF:000012">
    <property type="entry name" value="DNA ligase"/>
    <property type="match status" value="1"/>
</dbReference>
<dbReference type="FunFam" id="3.30.470.30:FF:000001">
    <property type="entry name" value="DNA ligase"/>
    <property type="match status" value="1"/>
</dbReference>
<dbReference type="Gene3D" id="6.20.10.30">
    <property type="match status" value="1"/>
</dbReference>
<dbReference type="Gene3D" id="1.10.150.20">
    <property type="entry name" value="5' to 3' exonuclease, C-terminal subdomain"/>
    <property type="match status" value="2"/>
</dbReference>
<dbReference type="Gene3D" id="3.40.50.10190">
    <property type="entry name" value="BRCT domain"/>
    <property type="match status" value="1"/>
</dbReference>
<dbReference type="Gene3D" id="3.30.470.30">
    <property type="entry name" value="DNA ligase/mRNA capping enzyme"/>
    <property type="match status" value="1"/>
</dbReference>
<dbReference type="Gene3D" id="1.10.287.610">
    <property type="entry name" value="Helix hairpin bin"/>
    <property type="match status" value="1"/>
</dbReference>
<dbReference type="Gene3D" id="2.40.50.140">
    <property type="entry name" value="Nucleic acid-binding proteins"/>
    <property type="match status" value="1"/>
</dbReference>
<dbReference type="HAMAP" id="MF_01588">
    <property type="entry name" value="DNA_ligase_A"/>
    <property type="match status" value="1"/>
</dbReference>
<dbReference type="InterPro" id="IPR001357">
    <property type="entry name" value="BRCT_dom"/>
</dbReference>
<dbReference type="InterPro" id="IPR036420">
    <property type="entry name" value="BRCT_dom_sf"/>
</dbReference>
<dbReference type="InterPro" id="IPR041663">
    <property type="entry name" value="DisA/LigA_HHH"/>
</dbReference>
<dbReference type="InterPro" id="IPR001679">
    <property type="entry name" value="DNA_ligase"/>
</dbReference>
<dbReference type="InterPro" id="IPR018239">
    <property type="entry name" value="DNA_ligase_AS"/>
</dbReference>
<dbReference type="InterPro" id="IPR033136">
    <property type="entry name" value="DNA_ligase_CS"/>
</dbReference>
<dbReference type="InterPro" id="IPR013839">
    <property type="entry name" value="DNAligase_adenylation"/>
</dbReference>
<dbReference type="InterPro" id="IPR013840">
    <property type="entry name" value="DNAligase_N"/>
</dbReference>
<dbReference type="InterPro" id="IPR003583">
    <property type="entry name" value="Hlx-hairpin-Hlx_DNA-bd_motif"/>
</dbReference>
<dbReference type="InterPro" id="IPR012340">
    <property type="entry name" value="NA-bd_OB-fold"/>
</dbReference>
<dbReference type="InterPro" id="IPR004150">
    <property type="entry name" value="NAD_DNA_ligase_OB"/>
</dbReference>
<dbReference type="InterPro" id="IPR010994">
    <property type="entry name" value="RuvA_2-like"/>
</dbReference>
<dbReference type="InterPro" id="IPR004149">
    <property type="entry name" value="Znf_DNAligase_C4"/>
</dbReference>
<dbReference type="NCBIfam" id="TIGR00575">
    <property type="entry name" value="dnlj"/>
    <property type="match status" value="1"/>
</dbReference>
<dbReference type="NCBIfam" id="NF005932">
    <property type="entry name" value="PRK07956.1"/>
    <property type="match status" value="1"/>
</dbReference>
<dbReference type="PANTHER" id="PTHR23389">
    <property type="entry name" value="CHROMOSOME TRANSMISSION FIDELITY FACTOR 18"/>
    <property type="match status" value="1"/>
</dbReference>
<dbReference type="PANTHER" id="PTHR23389:SF9">
    <property type="entry name" value="DNA LIGASE"/>
    <property type="match status" value="1"/>
</dbReference>
<dbReference type="Pfam" id="PF00533">
    <property type="entry name" value="BRCT"/>
    <property type="match status" value="1"/>
</dbReference>
<dbReference type="Pfam" id="PF01653">
    <property type="entry name" value="DNA_ligase_aden"/>
    <property type="match status" value="1"/>
</dbReference>
<dbReference type="Pfam" id="PF03120">
    <property type="entry name" value="DNA_ligase_OB"/>
    <property type="match status" value="1"/>
</dbReference>
<dbReference type="Pfam" id="PF03119">
    <property type="entry name" value="DNA_ligase_ZBD"/>
    <property type="match status" value="1"/>
</dbReference>
<dbReference type="Pfam" id="PF12826">
    <property type="entry name" value="HHH_2"/>
    <property type="match status" value="1"/>
</dbReference>
<dbReference type="Pfam" id="PF22745">
    <property type="entry name" value="Nlig-Ia"/>
    <property type="match status" value="1"/>
</dbReference>
<dbReference type="PIRSF" id="PIRSF001604">
    <property type="entry name" value="LigA"/>
    <property type="match status" value="1"/>
</dbReference>
<dbReference type="SMART" id="SM00292">
    <property type="entry name" value="BRCT"/>
    <property type="match status" value="1"/>
</dbReference>
<dbReference type="SMART" id="SM00278">
    <property type="entry name" value="HhH1"/>
    <property type="match status" value="3"/>
</dbReference>
<dbReference type="SMART" id="SM00532">
    <property type="entry name" value="LIGANc"/>
    <property type="match status" value="1"/>
</dbReference>
<dbReference type="SUPFAM" id="SSF52113">
    <property type="entry name" value="BRCT domain"/>
    <property type="match status" value="1"/>
</dbReference>
<dbReference type="SUPFAM" id="SSF56091">
    <property type="entry name" value="DNA ligase/mRNA capping enzyme, catalytic domain"/>
    <property type="match status" value="1"/>
</dbReference>
<dbReference type="SUPFAM" id="SSF50249">
    <property type="entry name" value="Nucleic acid-binding proteins"/>
    <property type="match status" value="1"/>
</dbReference>
<dbReference type="SUPFAM" id="SSF47781">
    <property type="entry name" value="RuvA domain 2-like"/>
    <property type="match status" value="1"/>
</dbReference>
<dbReference type="PROSITE" id="PS50172">
    <property type="entry name" value="BRCT"/>
    <property type="match status" value="1"/>
</dbReference>
<dbReference type="PROSITE" id="PS01055">
    <property type="entry name" value="DNA_LIGASE_N1"/>
    <property type="match status" value="1"/>
</dbReference>
<dbReference type="PROSITE" id="PS01056">
    <property type="entry name" value="DNA_LIGASE_N2"/>
    <property type="match status" value="1"/>
</dbReference>
<gene>
    <name evidence="1" type="primary">ligA</name>
    <name type="ordered locus">pc1760</name>
</gene>
<accession>Q6MAB5</accession>
<sequence length="665" mass="75278">MITQKDYEKLCHEIWHHNKLYYIEHQPIISDEEFDALLKKLEEIERSHPEWITEFSPSQRVNESLTSGFKTVAHRTPMLSLANTYSKEEIEDFIKRLQKLVGKRQVEFSVELKMDGIAITAIYEQGIFKRGITRGNGKRGDDITTNMRMIENLPLQLSGENLPDFLEIRGEVFMPRQVFLQLNEQKLQDGEVLWANPRNAAAGSLKLLDPKMVAERRLAVVFYGLAEDSSASIKKQAEVPSFFRSIGLPALEHHAYCQNIEQIWKFAEEIRSLRTILPYDIDGIVIKLNDFKDQKRLGVTGKSPRWAIAYKFAAEQAKTRIIDITVQIGRTGVLTPVAELEPIFLSGSTIARASLYNQEEVQRKDIRIGDLVTIEKGGDVIPKVLNVELSQRPLHSQPWQMPLYCPSCGTQVINIIGEVAVRCPNEDSCTEQQIRKLIYFVGKQAMDIKHMGEKIVIQLFQKGFIHLPSDIFALTEGQISQLTNFKTKAIQNLMRSIEESKHVSLERFIMALEIKYIGIGTAELLAARAGTIETLMQLNEEDLIKIEGVGGKVAQAVVEHFQNPKHRQEVYRLLELGVCPQSKTVQIFTNHAFQGKIFVLTGSLEHYTRQSAASLIKERGGKVSDSVSRKTNYVVAGAEPGSKLDKARTLGIPVLNEKEFISLCH</sequence>
<organism>
    <name type="scientific">Protochlamydia amoebophila (strain UWE25)</name>
    <dbReference type="NCBI Taxonomy" id="264201"/>
    <lineage>
        <taxon>Bacteria</taxon>
        <taxon>Pseudomonadati</taxon>
        <taxon>Chlamydiota</taxon>
        <taxon>Chlamydiia</taxon>
        <taxon>Parachlamydiales</taxon>
        <taxon>Parachlamydiaceae</taxon>
        <taxon>Candidatus Protochlamydia</taxon>
    </lineage>
</organism>